<reference key="1">
    <citation type="journal article" date="2003" name="Gene">
        <title>Characterization of mouse Eppin and a gene cluster of similar protease inhibitors on mouse chromosome 2.</title>
        <authorList>
            <person name="Sivashanmugam P."/>
            <person name="Hall S.H."/>
            <person name="Hamil K.G."/>
            <person name="French F.S."/>
            <person name="O'Rand M.G."/>
            <person name="Richardson R.T."/>
        </authorList>
    </citation>
    <scope>NUCLEOTIDE SEQUENCE [MRNA]</scope>
    <scope>TISSUE SPECIFICITY</scope>
    <scope>SUBCELLULAR LOCATION</scope>
    <source>
        <strain>BALB/cJ</strain>
        <tissue>Epididymis</tissue>
        <tissue>Testis</tissue>
    </source>
</reference>
<reference key="2">
    <citation type="journal article" date="2005" name="Science">
        <title>The transcriptional landscape of the mammalian genome.</title>
        <authorList>
            <person name="Carninci P."/>
            <person name="Kasukawa T."/>
            <person name="Katayama S."/>
            <person name="Gough J."/>
            <person name="Frith M.C."/>
            <person name="Maeda N."/>
            <person name="Oyama R."/>
            <person name="Ravasi T."/>
            <person name="Lenhard B."/>
            <person name="Wells C."/>
            <person name="Kodzius R."/>
            <person name="Shimokawa K."/>
            <person name="Bajic V.B."/>
            <person name="Brenner S.E."/>
            <person name="Batalov S."/>
            <person name="Forrest A.R."/>
            <person name="Zavolan M."/>
            <person name="Davis M.J."/>
            <person name="Wilming L.G."/>
            <person name="Aidinis V."/>
            <person name="Allen J.E."/>
            <person name="Ambesi-Impiombato A."/>
            <person name="Apweiler R."/>
            <person name="Aturaliya R.N."/>
            <person name="Bailey T.L."/>
            <person name="Bansal M."/>
            <person name="Baxter L."/>
            <person name="Beisel K.W."/>
            <person name="Bersano T."/>
            <person name="Bono H."/>
            <person name="Chalk A.M."/>
            <person name="Chiu K.P."/>
            <person name="Choudhary V."/>
            <person name="Christoffels A."/>
            <person name="Clutterbuck D.R."/>
            <person name="Crowe M.L."/>
            <person name="Dalla E."/>
            <person name="Dalrymple B.P."/>
            <person name="de Bono B."/>
            <person name="Della Gatta G."/>
            <person name="di Bernardo D."/>
            <person name="Down T."/>
            <person name="Engstrom P."/>
            <person name="Fagiolini M."/>
            <person name="Faulkner G."/>
            <person name="Fletcher C.F."/>
            <person name="Fukushima T."/>
            <person name="Furuno M."/>
            <person name="Futaki S."/>
            <person name="Gariboldi M."/>
            <person name="Georgii-Hemming P."/>
            <person name="Gingeras T.R."/>
            <person name="Gojobori T."/>
            <person name="Green R.E."/>
            <person name="Gustincich S."/>
            <person name="Harbers M."/>
            <person name="Hayashi Y."/>
            <person name="Hensch T.K."/>
            <person name="Hirokawa N."/>
            <person name="Hill D."/>
            <person name="Huminiecki L."/>
            <person name="Iacono M."/>
            <person name="Ikeo K."/>
            <person name="Iwama A."/>
            <person name="Ishikawa T."/>
            <person name="Jakt M."/>
            <person name="Kanapin A."/>
            <person name="Katoh M."/>
            <person name="Kawasawa Y."/>
            <person name="Kelso J."/>
            <person name="Kitamura H."/>
            <person name="Kitano H."/>
            <person name="Kollias G."/>
            <person name="Krishnan S.P."/>
            <person name="Kruger A."/>
            <person name="Kummerfeld S.K."/>
            <person name="Kurochkin I.V."/>
            <person name="Lareau L.F."/>
            <person name="Lazarevic D."/>
            <person name="Lipovich L."/>
            <person name="Liu J."/>
            <person name="Liuni S."/>
            <person name="McWilliam S."/>
            <person name="Madan Babu M."/>
            <person name="Madera M."/>
            <person name="Marchionni L."/>
            <person name="Matsuda H."/>
            <person name="Matsuzawa S."/>
            <person name="Miki H."/>
            <person name="Mignone F."/>
            <person name="Miyake S."/>
            <person name="Morris K."/>
            <person name="Mottagui-Tabar S."/>
            <person name="Mulder N."/>
            <person name="Nakano N."/>
            <person name="Nakauchi H."/>
            <person name="Ng P."/>
            <person name="Nilsson R."/>
            <person name="Nishiguchi S."/>
            <person name="Nishikawa S."/>
            <person name="Nori F."/>
            <person name="Ohara O."/>
            <person name="Okazaki Y."/>
            <person name="Orlando V."/>
            <person name="Pang K.C."/>
            <person name="Pavan W.J."/>
            <person name="Pavesi G."/>
            <person name="Pesole G."/>
            <person name="Petrovsky N."/>
            <person name="Piazza S."/>
            <person name="Reed J."/>
            <person name="Reid J.F."/>
            <person name="Ring B.Z."/>
            <person name="Ringwald M."/>
            <person name="Rost B."/>
            <person name="Ruan Y."/>
            <person name="Salzberg S.L."/>
            <person name="Sandelin A."/>
            <person name="Schneider C."/>
            <person name="Schoenbach C."/>
            <person name="Sekiguchi K."/>
            <person name="Semple C.A."/>
            <person name="Seno S."/>
            <person name="Sessa L."/>
            <person name="Sheng Y."/>
            <person name="Shibata Y."/>
            <person name="Shimada H."/>
            <person name="Shimada K."/>
            <person name="Silva D."/>
            <person name="Sinclair B."/>
            <person name="Sperling S."/>
            <person name="Stupka E."/>
            <person name="Sugiura K."/>
            <person name="Sultana R."/>
            <person name="Takenaka Y."/>
            <person name="Taki K."/>
            <person name="Tammoja K."/>
            <person name="Tan S.L."/>
            <person name="Tang S."/>
            <person name="Taylor M.S."/>
            <person name="Tegner J."/>
            <person name="Teichmann S.A."/>
            <person name="Ueda H.R."/>
            <person name="van Nimwegen E."/>
            <person name="Verardo R."/>
            <person name="Wei C.L."/>
            <person name="Yagi K."/>
            <person name="Yamanishi H."/>
            <person name="Zabarovsky E."/>
            <person name="Zhu S."/>
            <person name="Zimmer A."/>
            <person name="Hide W."/>
            <person name="Bult C."/>
            <person name="Grimmond S.M."/>
            <person name="Teasdale R.D."/>
            <person name="Liu E.T."/>
            <person name="Brusic V."/>
            <person name="Quackenbush J."/>
            <person name="Wahlestedt C."/>
            <person name="Mattick J.S."/>
            <person name="Hume D.A."/>
            <person name="Kai C."/>
            <person name="Sasaki D."/>
            <person name="Tomaru Y."/>
            <person name="Fukuda S."/>
            <person name="Kanamori-Katayama M."/>
            <person name="Suzuki M."/>
            <person name="Aoki J."/>
            <person name="Arakawa T."/>
            <person name="Iida J."/>
            <person name="Imamura K."/>
            <person name="Itoh M."/>
            <person name="Kato T."/>
            <person name="Kawaji H."/>
            <person name="Kawagashira N."/>
            <person name="Kawashima T."/>
            <person name="Kojima M."/>
            <person name="Kondo S."/>
            <person name="Konno H."/>
            <person name="Nakano K."/>
            <person name="Ninomiya N."/>
            <person name="Nishio T."/>
            <person name="Okada M."/>
            <person name="Plessy C."/>
            <person name="Shibata K."/>
            <person name="Shiraki T."/>
            <person name="Suzuki S."/>
            <person name="Tagami M."/>
            <person name="Waki K."/>
            <person name="Watahiki A."/>
            <person name="Okamura-Oho Y."/>
            <person name="Suzuki H."/>
            <person name="Kawai J."/>
            <person name="Hayashizaki Y."/>
        </authorList>
    </citation>
    <scope>NUCLEOTIDE SEQUENCE [LARGE SCALE MRNA]</scope>
    <source>
        <strain>C57BL/6J</strain>
        <tissue>Testis</tissue>
    </source>
</reference>
<reference key="3">
    <citation type="journal article" date="2004" name="Genome Res.">
        <title>The status, quality, and expansion of the NIH full-length cDNA project: the Mammalian Gene Collection (MGC).</title>
        <authorList>
            <consortium name="The MGC Project Team"/>
        </authorList>
    </citation>
    <scope>NUCLEOTIDE SEQUENCE [LARGE SCALE MRNA]</scope>
    <source>
        <tissue>Testis</tissue>
    </source>
</reference>
<reference key="4">
    <citation type="journal article" date="2009" name="PLoS Biol.">
        <title>Lineage-specific biology revealed by a finished genome assembly of the mouse.</title>
        <authorList>
            <person name="Church D.M."/>
            <person name="Goodstadt L."/>
            <person name="Hillier L.W."/>
            <person name="Zody M.C."/>
            <person name="Goldstein S."/>
            <person name="She X."/>
            <person name="Bult C.J."/>
            <person name="Agarwala R."/>
            <person name="Cherry J.L."/>
            <person name="DiCuccio M."/>
            <person name="Hlavina W."/>
            <person name="Kapustin Y."/>
            <person name="Meric P."/>
            <person name="Maglott D."/>
            <person name="Birtle Z."/>
            <person name="Marques A.C."/>
            <person name="Graves T."/>
            <person name="Zhou S."/>
            <person name="Teague B."/>
            <person name="Potamousis K."/>
            <person name="Churas C."/>
            <person name="Place M."/>
            <person name="Herschleb J."/>
            <person name="Runnheim R."/>
            <person name="Forrest D."/>
            <person name="Amos-Landgraf J."/>
            <person name="Schwartz D.C."/>
            <person name="Cheng Z."/>
            <person name="Lindblad-Toh K."/>
            <person name="Eichler E.E."/>
            <person name="Ponting C.P."/>
        </authorList>
    </citation>
    <scope>NUCLEOTIDE SEQUENCE [LARGE SCALE GENOMIC DNA]</scope>
    <source>
        <strain>C57BL/6J</strain>
    </source>
</reference>
<reference key="5">
    <citation type="submission" date="2005-07" db="EMBL/GenBank/DDBJ databases">
        <authorList>
            <person name="Mural R.J."/>
            <person name="Adams M.D."/>
            <person name="Myers E.W."/>
            <person name="Smith H.O."/>
            <person name="Venter J.C."/>
        </authorList>
    </citation>
    <scope>NUCLEOTIDE SEQUENCE [LARGE SCALE GENOMIC DNA]</scope>
</reference>
<reference key="6">
    <citation type="journal article" date="2006" name="Mol. Endocrinol.">
        <title>The effect of a sertoli cell-selective knockout of the androgen receptor on testicular gene expression in prepubertal mice.</title>
        <authorList>
            <person name="Denolet E."/>
            <person name="De Gendt K."/>
            <person name="Allemeersch J."/>
            <person name="Engelen K."/>
            <person name="Marchal K."/>
            <person name="Van Hummelen P."/>
            <person name="Tan K.A."/>
            <person name="Sharpe R.M."/>
            <person name="Saunders P.T."/>
            <person name="Swinnen J.V."/>
            <person name="Verhoeven G."/>
        </authorList>
    </citation>
    <scope>INDUCTION</scope>
</reference>
<reference key="7">
    <citation type="journal article" date="2010" name="Cell">
        <title>A tissue-specific atlas of mouse protein phosphorylation and expression.</title>
        <authorList>
            <person name="Huttlin E.L."/>
            <person name="Jedrychowski M.P."/>
            <person name="Elias J.E."/>
            <person name="Goswami T."/>
            <person name="Rad R."/>
            <person name="Beausoleil S.A."/>
            <person name="Villen J."/>
            <person name="Haas W."/>
            <person name="Sowa M.E."/>
            <person name="Gygi S.P."/>
        </authorList>
    </citation>
    <scope>IDENTIFICATION BY MASS SPECTROMETRY [LARGE SCALE ANALYSIS]</scope>
    <source>
        <tissue>Testis</tissue>
    </source>
</reference>
<reference key="8">
    <citation type="journal article" date="2011" name="Mol. Med. Report.">
        <title>Distribution of Eppin in mouse and human testis.</title>
        <authorList>
            <person name="Long Y."/>
            <person name="Gu A."/>
            <person name="Yang H."/>
            <person name="Ji G."/>
            <person name="Han X."/>
            <person name="Song L."/>
            <person name="Wang S."/>
            <person name="Wang X."/>
        </authorList>
    </citation>
    <scope>TISSUE SPECIFICITY</scope>
    <scope>SUBCELLULAR LOCATION</scope>
</reference>
<protein>
    <recommendedName>
        <fullName>Eppin</fullName>
    </recommendedName>
    <alternativeName>
        <fullName>Epididymal protease inhibitor</fullName>
    </alternativeName>
    <alternativeName>
        <fullName>Serine protease inhibitor-like with Kunitz and WAP domains 1</fullName>
    </alternativeName>
</protein>
<keyword id="KW-0929">Antimicrobial</keyword>
<keyword id="KW-1015">Disulfide bond</keyword>
<keyword id="KW-0646">Protease inhibitor</keyword>
<keyword id="KW-1185">Reference proteome</keyword>
<keyword id="KW-0964">Secreted</keyword>
<keyword id="KW-0722">Serine protease inhibitor</keyword>
<keyword id="KW-0732">Signal</keyword>
<evidence type="ECO:0000250" key="1"/>
<evidence type="ECO:0000255" key="2"/>
<evidence type="ECO:0000255" key="3">
    <source>
        <dbReference type="PROSITE-ProRule" id="PRU00031"/>
    </source>
</evidence>
<evidence type="ECO:0000255" key="4">
    <source>
        <dbReference type="PROSITE-ProRule" id="PRU00722"/>
    </source>
</evidence>
<evidence type="ECO:0000269" key="5">
    <source>
    </source>
</evidence>
<evidence type="ECO:0000269" key="6">
    <source>
    </source>
</evidence>
<evidence type="ECO:0000269" key="7">
    <source>
    </source>
</evidence>
<feature type="signal peptide" evidence="2">
    <location>
        <begin position="1"/>
        <end position="21"/>
    </location>
</feature>
<feature type="chain" id="PRO_0000041380" description="Eppin">
    <location>
        <begin position="22"/>
        <end position="134"/>
    </location>
</feature>
<feature type="domain" description="WAP" evidence="4">
    <location>
        <begin position="26"/>
        <end position="73"/>
    </location>
</feature>
<feature type="domain" description="BPTI/Kunitz inhibitor" evidence="3">
    <location>
        <begin position="77"/>
        <end position="127"/>
    </location>
</feature>
<feature type="region of interest" description="Interaction with SEMG1" evidence="1">
    <location>
        <begin position="102"/>
        <end position="133"/>
    </location>
</feature>
<feature type="region of interest" description="Interaction with LTF" evidence="1">
    <location>
        <begin position="117"/>
        <end position="133"/>
    </location>
</feature>
<feature type="disulfide bond" evidence="1">
    <location>
        <begin position="33"/>
        <end position="61"/>
    </location>
</feature>
<feature type="disulfide bond" evidence="1">
    <location>
        <begin position="40"/>
        <end position="65"/>
    </location>
</feature>
<feature type="disulfide bond" evidence="1">
    <location>
        <begin position="48"/>
        <end position="60"/>
    </location>
</feature>
<feature type="disulfide bond" evidence="1">
    <location>
        <begin position="54"/>
        <end position="69"/>
    </location>
</feature>
<feature type="disulfide bond" evidence="1">
    <location>
        <begin position="77"/>
        <end position="127"/>
    </location>
</feature>
<feature type="disulfide bond" evidence="1">
    <location>
        <begin position="86"/>
        <end position="110"/>
    </location>
</feature>
<feature type="disulfide bond" evidence="1">
    <location>
        <begin position="102"/>
        <end position="123"/>
    </location>
</feature>
<comment type="function">
    <text evidence="1">Serine protease inhibitor that plays an essential role in male reproduction and fertility. Modulates the hydrolysis of SEMG1 by KLK3/PSA (a serine protease), provides antimicrobial protection for spermatozoa in the ejaculate coagulum, and binds SEMG1 thereby inhibiting sperm motility (By similarity).</text>
</comment>
<comment type="subunit">
    <text evidence="1">Monomer. Homodimer. Homomultimers. Interacts (via C-terminus) with SEMG1 (via 164-283 AA). Interacts with LTF. Found in a complex with LTF, CLU, EPPIN and SEMG1.</text>
</comment>
<comment type="subcellular location">
    <subcellularLocation>
        <location>Secreted</location>
    </subcellularLocation>
    <subcellularLocation>
        <location>Cell surface</location>
    </subcellularLocation>
    <text>Present on the surface of spermatozoa both before and after capacitation.</text>
</comment>
<comment type="tissue specificity">
    <text evidence="5 7">Expressed in differentiated spermatogonia in testis. Expressed in spermatogonia cell lines GC-1 spg and GC-2spd(ts) as well as in the Leydig tumor cell line MLTC-1 (at protein level). Expressed specifically in epididymis and testis. Expressed predominantly on the postacrosomal region of mouse spermatozoa, in Sertoli cells, Leydig cells, and round spermatids in the testis, and in the principal cells of the cauda epididymidis epithelium.</text>
</comment>
<comment type="induction">
    <text evidence="6">Androgen dependent. Down-regulated in Sertoli cell-selective androgen receptor knockout mice.</text>
</comment>
<dbReference type="EMBL" id="AF346413">
    <property type="protein sequence ID" value="AAK31335.1"/>
    <property type="molecule type" value="mRNA"/>
</dbReference>
<dbReference type="EMBL" id="AK006296">
    <property type="protein sequence ID" value="BAB24514.1"/>
    <property type="molecule type" value="mRNA"/>
</dbReference>
<dbReference type="EMBL" id="AL591478">
    <property type="status" value="NOT_ANNOTATED_CDS"/>
    <property type="molecule type" value="Genomic_DNA"/>
</dbReference>
<dbReference type="EMBL" id="CH466551">
    <property type="protein sequence ID" value="EDL06403.1"/>
    <property type="molecule type" value="Genomic_DNA"/>
</dbReference>
<dbReference type="EMBL" id="BC048637">
    <property type="protein sequence ID" value="AAH48637.1"/>
    <property type="molecule type" value="mRNA"/>
</dbReference>
<dbReference type="CCDS" id="CCDS17043.1"/>
<dbReference type="RefSeq" id="NP_083601.1">
    <property type="nucleotide sequence ID" value="NM_029325.2"/>
</dbReference>
<dbReference type="SMR" id="Q9DA01"/>
<dbReference type="FunCoup" id="Q9DA01">
    <property type="interactions" value="8"/>
</dbReference>
<dbReference type="STRING" id="10090.ENSMUSP00000099389"/>
<dbReference type="MEROPS" id="I02.956"/>
<dbReference type="MEROPS" id="I17.953"/>
<dbReference type="PaxDb" id="10090-ENSMUSP00000099389"/>
<dbReference type="ProteomicsDB" id="275763"/>
<dbReference type="DNASU" id="75526"/>
<dbReference type="Ensembl" id="ENSMUST00000103100.2">
    <property type="protein sequence ID" value="ENSMUSP00000099389.2"/>
    <property type="gene ID" value="ENSMUSG00000017733.5"/>
</dbReference>
<dbReference type="GeneID" id="75526"/>
<dbReference type="KEGG" id="mmu:75526"/>
<dbReference type="UCSC" id="uc008nvh.1">
    <property type="organism name" value="mouse"/>
</dbReference>
<dbReference type="AGR" id="MGI:1922776"/>
<dbReference type="CTD" id="57119"/>
<dbReference type="MGI" id="MGI:1922776">
    <property type="gene designation" value="Eppin"/>
</dbReference>
<dbReference type="VEuPathDB" id="HostDB:ENSMUSG00000017733"/>
<dbReference type="eggNOG" id="KOG4295">
    <property type="taxonomic scope" value="Eukaryota"/>
</dbReference>
<dbReference type="GeneTree" id="ENSGT00940000156753"/>
<dbReference type="HOGENOM" id="CLU_127181_0_0_1"/>
<dbReference type="InParanoid" id="Q9DA01"/>
<dbReference type="OMA" id="CCVFNCG"/>
<dbReference type="OrthoDB" id="4473401at2759"/>
<dbReference type="PhylomeDB" id="Q9DA01"/>
<dbReference type="TreeFam" id="TF342459"/>
<dbReference type="Reactome" id="R-MMU-6803157">
    <property type="pathway name" value="Antimicrobial peptides"/>
</dbReference>
<dbReference type="BioGRID-ORCS" id="75526">
    <property type="hits" value="4 hits in 76 CRISPR screens"/>
</dbReference>
<dbReference type="PRO" id="PR:Q9DA01"/>
<dbReference type="Proteomes" id="UP000000589">
    <property type="component" value="Chromosome 2"/>
</dbReference>
<dbReference type="RNAct" id="Q9DA01">
    <property type="molecule type" value="protein"/>
</dbReference>
<dbReference type="Bgee" id="ENSMUSG00000017733">
    <property type="expression patterns" value="Expressed in seminiferous tubule of testis and 14 other cell types or tissues"/>
</dbReference>
<dbReference type="GO" id="GO:0001669">
    <property type="term" value="C:acrosomal vesicle"/>
    <property type="evidence" value="ECO:0000314"/>
    <property type="project" value="MGI"/>
</dbReference>
<dbReference type="GO" id="GO:0009986">
    <property type="term" value="C:cell surface"/>
    <property type="evidence" value="ECO:0007669"/>
    <property type="project" value="UniProtKB-SubCell"/>
</dbReference>
<dbReference type="GO" id="GO:0005737">
    <property type="term" value="C:cytoplasm"/>
    <property type="evidence" value="ECO:0000314"/>
    <property type="project" value="MGI"/>
</dbReference>
<dbReference type="GO" id="GO:0005615">
    <property type="term" value="C:extracellular space"/>
    <property type="evidence" value="ECO:0007669"/>
    <property type="project" value="Ensembl"/>
</dbReference>
<dbReference type="GO" id="GO:0032991">
    <property type="term" value="C:protein-containing complex"/>
    <property type="evidence" value="ECO:0007669"/>
    <property type="project" value="Ensembl"/>
</dbReference>
<dbReference type="GO" id="GO:0004867">
    <property type="term" value="F:serine-type endopeptidase inhibitor activity"/>
    <property type="evidence" value="ECO:0007669"/>
    <property type="project" value="UniProtKB-KW"/>
</dbReference>
<dbReference type="GO" id="GO:0042742">
    <property type="term" value="P:defense response to bacterium"/>
    <property type="evidence" value="ECO:0000250"/>
    <property type="project" value="UniProtKB"/>
</dbReference>
<dbReference type="GO" id="GO:0090281">
    <property type="term" value="P:negative regulation of calcium ion import"/>
    <property type="evidence" value="ECO:0007669"/>
    <property type="project" value="Ensembl"/>
</dbReference>
<dbReference type="GO" id="GO:1901318">
    <property type="term" value="P:negative regulation of flagellated sperm motility"/>
    <property type="evidence" value="ECO:0007669"/>
    <property type="project" value="Ensembl"/>
</dbReference>
<dbReference type="GO" id="GO:0010466">
    <property type="term" value="P:negative regulation of peptidase activity"/>
    <property type="evidence" value="ECO:0000250"/>
    <property type="project" value="UniProtKB"/>
</dbReference>
<dbReference type="CDD" id="cd22611">
    <property type="entry name" value="Kunitz_eppin"/>
    <property type="match status" value="1"/>
</dbReference>
<dbReference type="FunFam" id="4.10.410.10:FF:000015">
    <property type="entry name" value="WAP four-disulfide core domain 6A"/>
    <property type="match status" value="1"/>
</dbReference>
<dbReference type="FunFam" id="4.10.75.10:FF:000004">
    <property type="entry name" value="WAP four-disulfide core domain 6A"/>
    <property type="match status" value="1"/>
</dbReference>
<dbReference type="Gene3D" id="4.10.75.10">
    <property type="entry name" value="Elafin-like"/>
    <property type="match status" value="1"/>
</dbReference>
<dbReference type="Gene3D" id="4.10.410.10">
    <property type="entry name" value="Pancreatic trypsin inhibitor Kunitz domain"/>
    <property type="match status" value="1"/>
</dbReference>
<dbReference type="InterPro" id="IPR036645">
    <property type="entry name" value="Elafin-like_sf"/>
</dbReference>
<dbReference type="InterPro" id="IPR002223">
    <property type="entry name" value="Kunitz_BPTI"/>
</dbReference>
<dbReference type="InterPro" id="IPR036880">
    <property type="entry name" value="Kunitz_BPTI_sf"/>
</dbReference>
<dbReference type="InterPro" id="IPR020901">
    <property type="entry name" value="Prtase_inh_Kunz-CS"/>
</dbReference>
<dbReference type="InterPro" id="IPR051388">
    <property type="entry name" value="Serpin_venom_toxin"/>
</dbReference>
<dbReference type="InterPro" id="IPR008197">
    <property type="entry name" value="WAP_dom"/>
</dbReference>
<dbReference type="PANTHER" id="PTHR46751">
    <property type="entry name" value="EPPIN"/>
    <property type="match status" value="1"/>
</dbReference>
<dbReference type="PANTHER" id="PTHR46751:SF2">
    <property type="entry name" value="EPPIN"/>
    <property type="match status" value="1"/>
</dbReference>
<dbReference type="Pfam" id="PF00014">
    <property type="entry name" value="Kunitz_BPTI"/>
    <property type="match status" value="1"/>
</dbReference>
<dbReference type="Pfam" id="PF00095">
    <property type="entry name" value="WAP"/>
    <property type="match status" value="1"/>
</dbReference>
<dbReference type="PRINTS" id="PR00759">
    <property type="entry name" value="BASICPTASE"/>
</dbReference>
<dbReference type="SMART" id="SM00131">
    <property type="entry name" value="KU"/>
    <property type="match status" value="1"/>
</dbReference>
<dbReference type="SMART" id="SM00217">
    <property type="entry name" value="WAP"/>
    <property type="match status" value="1"/>
</dbReference>
<dbReference type="SUPFAM" id="SSF57362">
    <property type="entry name" value="BPTI-like"/>
    <property type="match status" value="1"/>
</dbReference>
<dbReference type="SUPFAM" id="SSF57256">
    <property type="entry name" value="Elafin-like"/>
    <property type="match status" value="1"/>
</dbReference>
<dbReference type="PROSITE" id="PS00280">
    <property type="entry name" value="BPTI_KUNITZ_1"/>
    <property type="match status" value="1"/>
</dbReference>
<dbReference type="PROSITE" id="PS50279">
    <property type="entry name" value="BPTI_KUNITZ_2"/>
    <property type="match status" value="1"/>
</dbReference>
<dbReference type="PROSITE" id="PS51390">
    <property type="entry name" value="WAP"/>
    <property type="match status" value="1"/>
</dbReference>
<gene>
    <name type="primary">Eppin</name>
    <name type="synonym">Spinlw1</name>
</gene>
<name>EPPI_MOUSE</name>
<proteinExistence type="evidence at protein level"/>
<organism>
    <name type="scientific">Mus musculus</name>
    <name type="common">Mouse</name>
    <dbReference type="NCBI Taxonomy" id="10090"/>
    <lineage>
        <taxon>Eukaryota</taxon>
        <taxon>Metazoa</taxon>
        <taxon>Chordata</taxon>
        <taxon>Craniata</taxon>
        <taxon>Vertebrata</taxon>
        <taxon>Euteleostomi</taxon>
        <taxon>Mammalia</taxon>
        <taxon>Eutheria</taxon>
        <taxon>Euarchontoglires</taxon>
        <taxon>Glires</taxon>
        <taxon>Rodentia</taxon>
        <taxon>Myomorpha</taxon>
        <taxon>Muroidea</taxon>
        <taxon>Muridae</taxon>
        <taxon>Murinae</taxon>
        <taxon>Mus</taxon>
        <taxon>Mus</taxon>
    </lineage>
</organism>
<sequence>MKLSGFVSILVLFGLLARVQGPSLADLLFPRRCPRFREECEHQERDLCTRDRDCPKKEKCCVFNCGKKCLNPQQDICSLPKDSGYCMAYFRRWWFNKENSTCQVFIYGGCQGNNNNFQSQSICQNACEKKSSLT</sequence>
<accession>Q9DA01</accession>
<accession>A2A5G9</accession>